<dbReference type="EMBL" id="CP000948">
    <property type="protein sequence ID" value="ACB02341.1"/>
    <property type="status" value="ALT_INIT"/>
    <property type="molecule type" value="Genomic_DNA"/>
</dbReference>
<dbReference type="RefSeq" id="WP_000726974.1">
    <property type="nucleotide sequence ID" value="NC_010473.1"/>
</dbReference>
<dbReference type="KEGG" id="ecd:ECDH10B_1223"/>
<dbReference type="HOGENOM" id="CLU_164687_0_0_6"/>
<dbReference type="HAMAP" id="MF_01455">
    <property type="entry name" value="UPF0757"/>
    <property type="match status" value="1"/>
</dbReference>
<dbReference type="InterPro" id="IPR025693">
    <property type="entry name" value="Gly-zipper_OmpA-like_dom"/>
</dbReference>
<dbReference type="InterPro" id="IPR027367">
    <property type="entry name" value="Gly-zipper_YMGG"/>
</dbReference>
<dbReference type="InterPro" id="IPR022833">
    <property type="entry name" value="UPF0757_YmgG"/>
</dbReference>
<dbReference type="Pfam" id="PF13436">
    <property type="entry name" value="Gly-zipper_OmpA"/>
    <property type="match status" value="1"/>
</dbReference>
<dbReference type="Pfam" id="PF13441">
    <property type="entry name" value="Gly-zipper_YMGG"/>
    <property type="match status" value="1"/>
</dbReference>
<gene>
    <name evidence="1" type="primary">ymgG</name>
    <name type="ordered locus">ECDH10B_1223</name>
</gene>
<proteinExistence type="inferred from homology"/>
<accession>B1XA58</accession>
<comment type="similarity">
    <text evidence="1">Belongs to the UPF0757 family.</text>
</comment>
<comment type="sequence caution" evidence="2">
    <conflict type="erroneous initiation">
        <sequence resource="EMBL-CDS" id="ACB02341"/>
    </conflict>
</comment>
<sequence length="114" mass="10807">MKKKILAFGLISALFCSTPAMADMNRTTKGALLGAGVGLLTGNGVNGVLKGAAVGAGVGAVTEKGRDGKNARKGAKVGAAVGAVTGVLTGNGLEGAIKGAVIGGTGGAILGKMK</sequence>
<name>YMGG_ECODH</name>
<reference key="1">
    <citation type="journal article" date="2008" name="J. Bacteriol.">
        <title>The complete genome sequence of Escherichia coli DH10B: insights into the biology of a laboratory workhorse.</title>
        <authorList>
            <person name="Durfee T."/>
            <person name="Nelson R."/>
            <person name="Baldwin S."/>
            <person name="Plunkett G. III"/>
            <person name="Burland V."/>
            <person name="Mau B."/>
            <person name="Petrosino J.F."/>
            <person name="Qin X."/>
            <person name="Muzny D.M."/>
            <person name="Ayele M."/>
            <person name="Gibbs R.A."/>
            <person name="Csorgo B."/>
            <person name="Posfai G."/>
            <person name="Weinstock G.M."/>
            <person name="Blattner F.R."/>
        </authorList>
    </citation>
    <scope>NUCLEOTIDE SEQUENCE [LARGE SCALE GENOMIC DNA]</scope>
    <source>
        <strain>K12 / DH10B</strain>
    </source>
</reference>
<evidence type="ECO:0000255" key="1">
    <source>
        <dbReference type="HAMAP-Rule" id="MF_01455"/>
    </source>
</evidence>
<evidence type="ECO:0000305" key="2"/>
<organism>
    <name type="scientific">Escherichia coli (strain K12 / DH10B)</name>
    <dbReference type="NCBI Taxonomy" id="316385"/>
    <lineage>
        <taxon>Bacteria</taxon>
        <taxon>Pseudomonadati</taxon>
        <taxon>Pseudomonadota</taxon>
        <taxon>Gammaproteobacteria</taxon>
        <taxon>Enterobacterales</taxon>
        <taxon>Enterobacteriaceae</taxon>
        <taxon>Escherichia</taxon>
    </lineage>
</organism>
<protein>
    <recommendedName>
        <fullName evidence="1">UPF0757 protein YmgG</fullName>
    </recommendedName>
</protein>
<feature type="chain" id="PRO_0000388951" description="UPF0757 protein YmgG">
    <location>
        <begin position="1"/>
        <end position="114"/>
    </location>
</feature>